<comment type="function">
    <text evidence="1">One of the primary rRNA binding proteins, it binds specifically to the 5'-end of 16S ribosomal RNA.</text>
</comment>
<comment type="subunit">
    <text evidence="1">Part of the 30S ribosomal subunit.</text>
</comment>
<comment type="similarity">
    <text evidence="1">Belongs to the universal ribosomal protein uS17 family.</text>
</comment>
<accession>A2C4Z0</accession>
<organism>
    <name type="scientific">Prochlorococcus marinus (strain NATL1A)</name>
    <dbReference type="NCBI Taxonomy" id="167555"/>
    <lineage>
        <taxon>Bacteria</taxon>
        <taxon>Bacillati</taxon>
        <taxon>Cyanobacteriota</taxon>
        <taxon>Cyanophyceae</taxon>
        <taxon>Synechococcales</taxon>
        <taxon>Prochlorococcaceae</taxon>
        <taxon>Prochlorococcus</taxon>
    </lineage>
</organism>
<sequence>MALKEMVGTVVSDKMQKTVVVAVENRFPHPIYQKIISRTTRYKAHDAENHCKVGDRVRIKESPPISAHKRWTVTDVLVKGMKSKEAAK</sequence>
<proteinExistence type="inferred from homology"/>
<dbReference type="EMBL" id="CP000553">
    <property type="protein sequence ID" value="ABM76550.1"/>
    <property type="molecule type" value="Genomic_DNA"/>
</dbReference>
<dbReference type="RefSeq" id="WP_011295464.1">
    <property type="nucleotide sequence ID" value="NC_008819.1"/>
</dbReference>
<dbReference type="SMR" id="A2C4Z0"/>
<dbReference type="KEGG" id="pme:NATL1_19941"/>
<dbReference type="eggNOG" id="COG0186">
    <property type="taxonomic scope" value="Bacteria"/>
</dbReference>
<dbReference type="HOGENOM" id="CLU_073626_1_2_3"/>
<dbReference type="Proteomes" id="UP000002592">
    <property type="component" value="Chromosome"/>
</dbReference>
<dbReference type="GO" id="GO:0022627">
    <property type="term" value="C:cytosolic small ribosomal subunit"/>
    <property type="evidence" value="ECO:0007669"/>
    <property type="project" value="TreeGrafter"/>
</dbReference>
<dbReference type="GO" id="GO:0019843">
    <property type="term" value="F:rRNA binding"/>
    <property type="evidence" value="ECO:0007669"/>
    <property type="project" value="UniProtKB-UniRule"/>
</dbReference>
<dbReference type="GO" id="GO:0003735">
    <property type="term" value="F:structural constituent of ribosome"/>
    <property type="evidence" value="ECO:0007669"/>
    <property type="project" value="InterPro"/>
</dbReference>
<dbReference type="GO" id="GO:0006412">
    <property type="term" value="P:translation"/>
    <property type="evidence" value="ECO:0007669"/>
    <property type="project" value="UniProtKB-UniRule"/>
</dbReference>
<dbReference type="CDD" id="cd00364">
    <property type="entry name" value="Ribosomal_uS17"/>
    <property type="match status" value="1"/>
</dbReference>
<dbReference type="Gene3D" id="2.40.50.140">
    <property type="entry name" value="Nucleic acid-binding proteins"/>
    <property type="match status" value="1"/>
</dbReference>
<dbReference type="HAMAP" id="MF_01345_B">
    <property type="entry name" value="Ribosomal_uS17_B"/>
    <property type="match status" value="1"/>
</dbReference>
<dbReference type="InterPro" id="IPR012340">
    <property type="entry name" value="NA-bd_OB-fold"/>
</dbReference>
<dbReference type="InterPro" id="IPR000266">
    <property type="entry name" value="Ribosomal_uS17"/>
</dbReference>
<dbReference type="InterPro" id="IPR019984">
    <property type="entry name" value="Ribosomal_uS17_bact/chlr"/>
</dbReference>
<dbReference type="NCBIfam" id="NF004123">
    <property type="entry name" value="PRK05610.1"/>
    <property type="match status" value="1"/>
</dbReference>
<dbReference type="NCBIfam" id="TIGR03635">
    <property type="entry name" value="uS17_bact"/>
    <property type="match status" value="1"/>
</dbReference>
<dbReference type="PANTHER" id="PTHR10744">
    <property type="entry name" value="40S RIBOSOMAL PROTEIN S11 FAMILY MEMBER"/>
    <property type="match status" value="1"/>
</dbReference>
<dbReference type="PANTHER" id="PTHR10744:SF1">
    <property type="entry name" value="SMALL RIBOSOMAL SUBUNIT PROTEIN US17M"/>
    <property type="match status" value="1"/>
</dbReference>
<dbReference type="Pfam" id="PF00366">
    <property type="entry name" value="Ribosomal_S17"/>
    <property type="match status" value="1"/>
</dbReference>
<dbReference type="PRINTS" id="PR00973">
    <property type="entry name" value="RIBOSOMALS17"/>
</dbReference>
<dbReference type="SUPFAM" id="SSF50249">
    <property type="entry name" value="Nucleic acid-binding proteins"/>
    <property type="match status" value="1"/>
</dbReference>
<reference key="1">
    <citation type="journal article" date="2007" name="PLoS Genet.">
        <title>Patterns and implications of gene gain and loss in the evolution of Prochlorococcus.</title>
        <authorList>
            <person name="Kettler G.C."/>
            <person name="Martiny A.C."/>
            <person name="Huang K."/>
            <person name="Zucker J."/>
            <person name="Coleman M.L."/>
            <person name="Rodrigue S."/>
            <person name="Chen F."/>
            <person name="Lapidus A."/>
            <person name="Ferriera S."/>
            <person name="Johnson J."/>
            <person name="Steglich C."/>
            <person name="Church G.M."/>
            <person name="Richardson P."/>
            <person name="Chisholm S.W."/>
        </authorList>
    </citation>
    <scope>NUCLEOTIDE SEQUENCE [LARGE SCALE GENOMIC DNA]</scope>
    <source>
        <strain>NATL1A</strain>
    </source>
</reference>
<protein>
    <recommendedName>
        <fullName evidence="1">Small ribosomal subunit protein uS17</fullName>
    </recommendedName>
    <alternativeName>
        <fullName evidence="2">30S ribosomal protein S17</fullName>
    </alternativeName>
</protein>
<keyword id="KW-0687">Ribonucleoprotein</keyword>
<keyword id="KW-0689">Ribosomal protein</keyword>
<keyword id="KW-0694">RNA-binding</keyword>
<keyword id="KW-0699">rRNA-binding</keyword>
<gene>
    <name evidence="1" type="primary">rpsQ</name>
    <name evidence="1" type="synonym">rps17</name>
    <name type="ordered locus">NATL1_19941</name>
</gene>
<name>RS17_PROM1</name>
<evidence type="ECO:0000255" key="1">
    <source>
        <dbReference type="HAMAP-Rule" id="MF_01345"/>
    </source>
</evidence>
<evidence type="ECO:0000305" key="2"/>
<feature type="chain" id="PRO_1000054993" description="Small ribosomal subunit protein uS17">
    <location>
        <begin position="1"/>
        <end position="88"/>
    </location>
</feature>